<organism>
    <name type="scientific">Reclinomonas americana</name>
    <dbReference type="NCBI Taxonomy" id="48483"/>
    <lineage>
        <taxon>Eukaryota</taxon>
        <taxon>Discoba</taxon>
        <taxon>Jakobida</taxon>
        <taxon>Histionina</taxon>
        <taxon>Histionidae</taxon>
        <taxon>Reclinomonas</taxon>
    </lineage>
</organism>
<feature type="chain" id="PRO_0000091472" description="Elongation factor Tu, mitochondrial">
    <location>
        <begin position="1"/>
        <end position="394"/>
    </location>
</feature>
<feature type="domain" description="tr-type G">
    <location>
        <begin position="10"/>
        <end position="204"/>
    </location>
</feature>
<feature type="region of interest" description="G1" evidence="1">
    <location>
        <begin position="19"/>
        <end position="26"/>
    </location>
</feature>
<feature type="region of interest" description="G2" evidence="1">
    <location>
        <begin position="60"/>
        <end position="64"/>
    </location>
</feature>
<feature type="region of interest" description="G3" evidence="1">
    <location>
        <begin position="81"/>
        <end position="84"/>
    </location>
</feature>
<feature type="region of interest" description="G4" evidence="1">
    <location>
        <begin position="136"/>
        <end position="139"/>
    </location>
</feature>
<feature type="region of interest" description="G5" evidence="1">
    <location>
        <begin position="174"/>
        <end position="176"/>
    </location>
</feature>
<feature type="binding site" evidence="1">
    <location>
        <begin position="19"/>
        <end position="26"/>
    </location>
    <ligand>
        <name>GTP</name>
        <dbReference type="ChEBI" id="CHEBI:37565"/>
    </ligand>
</feature>
<feature type="binding site" evidence="1">
    <location>
        <begin position="81"/>
        <end position="85"/>
    </location>
    <ligand>
        <name>GTP</name>
        <dbReference type="ChEBI" id="CHEBI:37565"/>
    </ligand>
</feature>
<feature type="binding site" evidence="1">
    <location>
        <begin position="136"/>
        <end position="139"/>
    </location>
    <ligand>
        <name>GTP</name>
        <dbReference type="ChEBI" id="CHEBI:37565"/>
    </ligand>
</feature>
<dbReference type="EMBL" id="AF007261">
    <property type="protein sequence ID" value="AAD11872.1"/>
    <property type="molecule type" value="Genomic_DNA"/>
</dbReference>
<dbReference type="PIR" id="S78139">
    <property type="entry name" value="S78139"/>
</dbReference>
<dbReference type="RefSeq" id="NP_044757.1">
    <property type="nucleotide sequence ID" value="NC_001823.1"/>
</dbReference>
<dbReference type="SMR" id="O21245"/>
<dbReference type="GeneID" id="801090"/>
<dbReference type="GO" id="GO:0005739">
    <property type="term" value="C:mitochondrion"/>
    <property type="evidence" value="ECO:0007669"/>
    <property type="project" value="UniProtKB-SubCell"/>
</dbReference>
<dbReference type="GO" id="GO:0005525">
    <property type="term" value="F:GTP binding"/>
    <property type="evidence" value="ECO:0007669"/>
    <property type="project" value="UniProtKB-KW"/>
</dbReference>
<dbReference type="GO" id="GO:0003924">
    <property type="term" value="F:GTPase activity"/>
    <property type="evidence" value="ECO:0007669"/>
    <property type="project" value="InterPro"/>
</dbReference>
<dbReference type="GO" id="GO:0003746">
    <property type="term" value="F:translation elongation factor activity"/>
    <property type="evidence" value="ECO:0007669"/>
    <property type="project" value="UniProtKB-KW"/>
</dbReference>
<dbReference type="GO" id="GO:0070125">
    <property type="term" value="P:mitochondrial translational elongation"/>
    <property type="evidence" value="ECO:0007669"/>
    <property type="project" value="TreeGrafter"/>
</dbReference>
<dbReference type="CDD" id="cd01884">
    <property type="entry name" value="EF_Tu"/>
    <property type="match status" value="1"/>
</dbReference>
<dbReference type="CDD" id="cd03697">
    <property type="entry name" value="EFTU_II"/>
    <property type="match status" value="1"/>
</dbReference>
<dbReference type="CDD" id="cd03707">
    <property type="entry name" value="EFTU_III"/>
    <property type="match status" value="1"/>
</dbReference>
<dbReference type="FunFam" id="2.40.30.10:FF:000001">
    <property type="entry name" value="Elongation factor Tu"/>
    <property type="match status" value="1"/>
</dbReference>
<dbReference type="FunFam" id="3.40.50.300:FF:000003">
    <property type="entry name" value="Elongation factor Tu"/>
    <property type="match status" value="1"/>
</dbReference>
<dbReference type="Gene3D" id="3.40.50.300">
    <property type="entry name" value="P-loop containing nucleotide triphosphate hydrolases"/>
    <property type="match status" value="1"/>
</dbReference>
<dbReference type="Gene3D" id="2.40.30.10">
    <property type="entry name" value="Translation factors"/>
    <property type="match status" value="2"/>
</dbReference>
<dbReference type="HAMAP" id="MF_00118_B">
    <property type="entry name" value="EF_Tu_B"/>
    <property type="match status" value="1"/>
</dbReference>
<dbReference type="InterPro" id="IPR041709">
    <property type="entry name" value="EF-Tu_GTP-bd"/>
</dbReference>
<dbReference type="InterPro" id="IPR050055">
    <property type="entry name" value="EF-Tu_GTPase"/>
</dbReference>
<dbReference type="InterPro" id="IPR004161">
    <property type="entry name" value="EFTu-like_2"/>
</dbReference>
<dbReference type="InterPro" id="IPR033720">
    <property type="entry name" value="EFTU_2"/>
</dbReference>
<dbReference type="InterPro" id="IPR031157">
    <property type="entry name" value="G_TR_CS"/>
</dbReference>
<dbReference type="InterPro" id="IPR027417">
    <property type="entry name" value="P-loop_NTPase"/>
</dbReference>
<dbReference type="InterPro" id="IPR005225">
    <property type="entry name" value="Small_GTP-bd"/>
</dbReference>
<dbReference type="InterPro" id="IPR000795">
    <property type="entry name" value="T_Tr_GTP-bd_dom"/>
</dbReference>
<dbReference type="InterPro" id="IPR009000">
    <property type="entry name" value="Transl_B-barrel_sf"/>
</dbReference>
<dbReference type="InterPro" id="IPR009001">
    <property type="entry name" value="Transl_elong_EF1A/Init_IF2_C"/>
</dbReference>
<dbReference type="InterPro" id="IPR004541">
    <property type="entry name" value="Transl_elong_EFTu/EF1A_bac/org"/>
</dbReference>
<dbReference type="InterPro" id="IPR004160">
    <property type="entry name" value="Transl_elong_EFTu/EF1A_C"/>
</dbReference>
<dbReference type="NCBIfam" id="TIGR00485">
    <property type="entry name" value="EF-Tu"/>
    <property type="match status" value="1"/>
</dbReference>
<dbReference type="NCBIfam" id="NF000766">
    <property type="entry name" value="PRK00049.1"/>
    <property type="match status" value="1"/>
</dbReference>
<dbReference type="NCBIfam" id="NF009372">
    <property type="entry name" value="PRK12735.1"/>
    <property type="match status" value="1"/>
</dbReference>
<dbReference type="NCBIfam" id="NF009373">
    <property type="entry name" value="PRK12736.1"/>
    <property type="match status" value="1"/>
</dbReference>
<dbReference type="NCBIfam" id="TIGR00231">
    <property type="entry name" value="small_GTP"/>
    <property type="match status" value="1"/>
</dbReference>
<dbReference type="PANTHER" id="PTHR43721:SF22">
    <property type="entry name" value="ELONGATION FACTOR TU, MITOCHONDRIAL"/>
    <property type="match status" value="1"/>
</dbReference>
<dbReference type="PANTHER" id="PTHR43721">
    <property type="entry name" value="ELONGATION FACTOR TU-RELATED"/>
    <property type="match status" value="1"/>
</dbReference>
<dbReference type="Pfam" id="PF00009">
    <property type="entry name" value="GTP_EFTU"/>
    <property type="match status" value="1"/>
</dbReference>
<dbReference type="Pfam" id="PF03144">
    <property type="entry name" value="GTP_EFTU_D2"/>
    <property type="match status" value="1"/>
</dbReference>
<dbReference type="Pfam" id="PF03143">
    <property type="entry name" value="GTP_EFTU_D3"/>
    <property type="match status" value="1"/>
</dbReference>
<dbReference type="PRINTS" id="PR00315">
    <property type="entry name" value="ELONGATNFCT"/>
</dbReference>
<dbReference type="SUPFAM" id="SSF50465">
    <property type="entry name" value="EF-Tu/eEF-1alpha/eIF2-gamma C-terminal domain"/>
    <property type="match status" value="1"/>
</dbReference>
<dbReference type="SUPFAM" id="SSF52540">
    <property type="entry name" value="P-loop containing nucleoside triphosphate hydrolases"/>
    <property type="match status" value="1"/>
</dbReference>
<dbReference type="SUPFAM" id="SSF50447">
    <property type="entry name" value="Translation proteins"/>
    <property type="match status" value="1"/>
</dbReference>
<dbReference type="PROSITE" id="PS00301">
    <property type="entry name" value="G_TR_1"/>
    <property type="match status" value="1"/>
</dbReference>
<dbReference type="PROSITE" id="PS51722">
    <property type="entry name" value="G_TR_2"/>
    <property type="match status" value="1"/>
</dbReference>
<gene>
    <name type="primary">TUFA</name>
</gene>
<proteinExistence type="inferred from homology"/>
<name>EFTU_RECAM</name>
<comment type="function">
    <text>This protein promotes the GTP-dependent binding of aminoacyl-tRNA to the A-site of ribosomes during protein biosynthesis.</text>
</comment>
<comment type="subcellular location">
    <subcellularLocation>
        <location>Mitochondrion</location>
    </subcellularLocation>
</comment>
<comment type="similarity">
    <text evidence="2">Belongs to the TRAFAC class translation factor GTPase superfamily. Classic translation factor GTPase family. EF-Tu/EF-1A subfamily.</text>
</comment>
<protein>
    <recommendedName>
        <fullName>Elongation factor Tu, mitochondrial</fullName>
    </recommendedName>
</protein>
<geneLocation type="mitochondrion"/>
<keyword id="KW-0251">Elongation factor</keyword>
<keyword id="KW-0342">GTP-binding</keyword>
<keyword id="KW-0496">Mitochondrion</keyword>
<keyword id="KW-0547">Nucleotide-binding</keyword>
<keyword id="KW-0648">Protein biosynthesis</keyword>
<sequence>MSKEKFERTKPHCNIGTIGHVDHGKTTLTAAITKVLSETGGAVFTDYDQIDKAPEEKKRGITISTSHVEYETTKRHYAHIDCPGHEDYVKNMITGAAQMDGAILVVSAVDGPMPQTREHILLSRQVGVPSLVVFLNKVDMVNDPEMLDLVEMEVRELLLSYKYPGDEIPIIRGSALKALQGEIEYKKSILKLMEAVDNYIPQPERSFDRPFLMPVEDVFSIAGRGTVVTGRVEQGQIKIGDAVEIIGLGSTVKTTCTGIEMFHKLLDYGQAGDNLGMLIRGIQRDAVQRGQVICAPGSVKPHTKYEAQVYILTKEEGGRHKPFFNNYRPQFFFRTADVTGTIQLPKDVEMVNPGDNVKLIIELITPIAMEEGIRFAMREGGRTIGAGVVSKIIE</sequence>
<evidence type="ECO:0000250" key="1"/>
<evidence type="ECO:0000305" key="2"/>
<accession>O21245</accession>
<reference key="1">
    <citation type="journal article" date="1997" name="Nature">
        <title>An ancestral mitochondrial DNA resembling a eubacterial genome in miniature.</title>
        <authorList>
            <person name="Lang B.F."/>
            <person name="Burger G."/>
            <person name="O'Kelly C.J."/>
            <person name="Cedergren R."/>
            <person name="Golding G.B."/>
            <person name="Lemieux C."/>
            <person name="Sankoff D."/>
            <person name="Turmel M."/>
            <person name="Gray M.W."/>
        </authorList>
    </citation>
    <scope>NUCLEOTIDE SEQUENCE [GENOMIC DNA]</scope>
    <source>
        <strain>ATCC 50394</strain>
    </source>
</reference>